<sequence length="218" mass="24665">MSNVNKVYDWFEERLEIQAIADDITSKYVPPHVNIFYCLGGITLTCFLVQVATGFAMTFYYRPIVNEAFASVQYIMIEANFGWLIRSVHRWSASMMVLMMILHVFRVYLTGGFKKPRELTWVTGVLLGVLTASFGVTGYSLPWDQTGYWAIKIVTGVPEAIPLIGAPMVELLRGSASVGQFTLTRFYSLHTFVLPLITIVFMLMHFLMIRKQGISGPL</sequence>
<organism>
    <name type="scientific">Cuscuta gronovii</name>
    <name type="common">Common dodder</name>
    <name type="synonym">Epithymum gronovii</name>
    <dbReference type="NCBI Taxonomy" id="35886"/>
    <lineage>
        <taxon>Eukaryota</taxon>
        <taxon>Viridiplantae</taxon>
        <taxon>Streptophyta</taxon>
        <taxon>Embryophyta</taxon>
        <taxon>Tracheophyta</taxon>
        <taxon>Spermatophyta</taxon>
        <taxon>Magnoliopsida</taxon>
        <taxon>eudicotyledons</taxon>
        <taxon>Gunneridae</taxon>
        <taxon>Pentapetalae</taxon>
        <taxon>asterids</taxon>
        <taxon>lamiids</taxon>
        <taxon>Solanales</taxon>
        <taxon>Convolvulaceae</taxon>
        <taxon>Cuscuteae</taxon>
        <taxon>Cuscuta</taxon>
        <taxon>Cuscuta subgen. Grammica</taxon>
        <taxon>Cuscuta sect. Oxycarpae</taxon>
    </lineage>
</organism>
<reference key="1">
    <citation type="journal article" date="2007" name="BMC Plant Biol.">
        <title>Complete DNA sequences of the plastid genomes of two parasitic flowering plant species, Cuscuta reflexa and Cuscuta gronovii.</title>
        <authorList>
            <person name="Funk H.T."/>
            <person name="Berg S."/>
            <person name="Krupinska K."/>
            <person name="Maier U.-G."/>
            <person name="Krause K."/>
        </authorList>
    </citation>
    <scope>NUCLEOTIDE SEQUENCE [LARGE SCALE GENOMIC DNA]</scope>
    <scope>ABSENCE OF RNA EDITING</scope>
</reference>
<evidence type="ECO:0000250" key="1"/>
<evidence type="ECO:0000255" key="2"/>
<evidence type="ECO:0000255" key="3">
    <source>
        <dbReference type="HAMAP-Rule" id="MF_00633"/>
    </source>
</evidence>
<evidence type="ECO:0000305" key="4"/>
<protein>
    <recommendedName>
        <fullName>Cytochrome b6</fullName>
    </recommendedName>
</protein>
<feature type="chain" id="PRO_0000308480" description="Cytochrome b6">
    <location>
        <begin position="1"/>
        <end position="218"/>
    </location>
</feature>
<feature type="transmembrane region" description="Helical" evidence="2">
    <location>
        <begin position="35"/>
        <end position="55"/>
    </location>
</feature>
<feature type="transmembrane region" description="Helical" evidence="2">
    <location>
        <begin position="93"/>
        <end position="113"/>
    </location>
</feature>
<feature type="transmembrane region" description="Helical" evidence="2">
    <location>
        <begin position="119"/>
        <end position="139"/>
    </location>
</feature>
<feature type="transmembrane region" description="Helical" evidence="2">
    <location>
        <begin position="189"/>
        <end position="209"/>
    </location>
</feature>
<feature type="binding site" description="covalent" evidence="3">
    <location>
        <position position="38"/>
    </location>
    <ligand>
        <name>heme c</name>
        <dbReference type="ChEBI" id="CHEBI:61717"/>
    </ligand>
</feature>
<feature type="binding site" description="axial binding residue" evidence="3">
    <location>
        <position position="89"/>
    </location>
    <ligand>
        <name>heme b</name>
        <dbReference type="ChEBI" id="CHEBI:60344"/>
        <label>2</label>
    </ligand>
    <ligandPart>
        <name>Fe</name>
        <dbReference type="ChEBI" id="CHEBI:18248"/>
    </ligandPart>
</feature>
<feature type="binding site" description="axial binding residue" evidence="3">
    <location>
        <position position="103"/>
    </location>
    <ligand>
        <name>heme b</name>
        <dbReference type="ChEBI" id="CHEBI:60344"/>
        <label>1</label>
    </ligand>
    <ligandPart>
        <name>Fe</name>
        <dbReference type="ChEBI" id="CHEBI:18248"/>
    </ligandPart>
</feature>
<feature type="binding site" description="axial binding residue" evidence="3">
    <location>
        <position position="190"/>
    </location>
    <ligand>
        <name>heme b</name>
        <dbReference type="ChEBI" id="CHEBI:60344"/>
        <label>2</label>
    </ligand>
    <ligandPart>
        <name>Fe</name>
        <dbReference type="ChEBI" id="CHEBI:18248"/>
    </ligandPart>
</feature>
<feature type="binding site" description="axial binding residue" evidence="3">
    <location>
        <position position="205"/>
    </location>
    <ligand>
        <name>heme b</name>
        <dbReference type="ChEBI" id="CHEBI:60344"/>
        <label>1</label>
    </ligand>
    <ligandPart>
        <name>Fe</name>
        <dbReference type="ChEBI" id="CHEBI:18248"/>
    </ligandPart>
</feature>
<comment type="function">
    <text evidence="1">Component of the cytochrome b6-f complex, which mediates electron transfer between photosystem II (PSII) and photosystem I (PSI), cyclic electron flow around PSI, and state transitions.</text>
</comment>
<comment type="cofactor">
    <cofactor evidence="3">
        <name>heme b</name>
        <dbReference type="ChEBI" id="CHEBI:60344"/>
    </cofactor>
    <text evidence="3">Binds 2 heme b groups non-covalently with two histidine residues as axial ligands.</text>
</comment>
<comment type="cofactor">
    <cofactor evidence="3">
        <name>heme c</name>
        <dbReference type="ChEBI" id="CHEBI:61717"/>
    </cofactor>
    <text evidence="3">Binds one heme group covalently by a single cysteine link with no axial amino acid ligand. This heme was named heme ci.</text>
</comment>
<comment type="subunit">
    <text evidence="1">The 4 large subunits of the cytochrome b6-f complex are cytochrome b6, subunit IV (17 kDa polypeptide, PetD), cytochrome f and the Rieske protein, while the 4 small subunits are PetG, PetL, PetM and PetN. The complex functions as a dimer (By similarity).</text>
</comment>
<comment type="subcellular location">
    <subcellularLocation>
        <location evidence="4">Plastid thylakoid membrane</location>
        <topology evidence="4">Multi-pass membrane protein</topology>
    </subcellularLocation>
</comment>
<comment type="miscellaneous">
    <text evidence="1">Heme 1 (or BH or b566) is high-potential and absorbs at about 566 nm, and heme 2 (or BL or b562) is low-potential and absorbs at about 562 nm.</text>
</comment>
<comment type="similarity">
    <text evidence="4">Belongs to the cytochrome b family. PetB subfamily.</text>
</comment>
<comment type="caution">
    <text evidence="4">Young tissue from this organism is photosynthetic and contains some thylakoids, although the photosynthetic activity does not exceed the light compensation point.</text>
</comment>
<dbReference type="EMBL" id="AM711639">
    <property type="protein sequence ID" value="CAM98355.1"/>
    <property type="molecule type" value="Genomic_DNA"/>
</dbReference>
<dbReference type="RefSeq" id="YP_001430068.1">
    <property type="nucleotide sequence ID" value="NC_009765.1"/>
</dbReference>
<dbReference type="SMR" id="A7M927"/>
<dbReference type="GeneID" id="5536724"/>
<dbReference type="GO" id="GO:0055035">
    <property type="term" value="C:plastid thylakoid membrane"/>
    <property type="evidence" value="ECO:0007669"/>
    <property type="project" value="UniProtKB-SubCell"/>
</dbReference>
<dbReference type="GO" id="GO:0045158">
    <property type="term" value="F:electron transporter, transferring electrons within cytochrome b6/f complex of photosystem II activity"/>
    <property type="evidence" value="ECO:0007669"/>
    <property type="project" value="UniProtKB-UniRule"/>
</dbReference>
<dbReference type="GO" id="GO:0046872">
    <property type="term" value="F:metal ion binding"/>
    <property type="evidence" value="ECO:0007669"/>
    <property type="project" value="UniProtKB-KW"/>
</dbReference>
<dbReference type="GO" id="GO:0016491">
    <property type="term" value="F:oxidoreductase activity"/>
    <property type="evidence" value="ECO:0007669"/>
    <property type="project" value="InterPro"/>
</dbReference>
<dbReference type="GO" id="GO:0015979">
    <property type="term" value="P:photosynthesis"/>
    <property type="evidence" value="ECO:0007669"/>
    <property type="project" value="UniProtKB-UniRule"/>
</dbReference>
<dbReference type="GO" id="GO:0022904">
    <property type="term" value="P:respiratory electron transport chain"/>
    <property type="evidence" value="ECO:0007669"/>
    <property type="project" value="InterPro"/>
</dbReference>
<dbReference type="CDD" id="cd00284">
    <property type="entry name" value="Cytochrome_b_N"/>
    <property type="match status" value="1"/>
</dbReference>
<dbReference type="FunFam" id="1.20.810.10:FF:000001">
    <property type="entry name" value="Cytochrome b6"/>
    <property type="match status" value="1"/>
</dbReference>
<dbReference type="Gene3D" id="1.20.810.10">
    <property type="entry name" value="Cytochrome Bc1 Complex, Chain C"/>
    <property type="match status" value="1"/>
</dbReference>
<dbReference type="HAMAP" id="MF_00633">
    <property type="entry name" value="Cytb6_f_cytb6"/>
    <property type="match status" value="1"/>
</dbReference>
<dbReference type="InterPro" id="IPR005797">
    <property type="entry name" value="Cyt_b/b6_N"/>
</dbReference>
<dbReference type="InterPro" id="IPR023530">
    <property type="entry name" value="Cyt_B6_PetB"/>
</dbReference>
<dbReference type="InterPro" id="IPR027387">
    <property type="entry name" value="Cytb/b6-like_sf"/>
</dbReference>
<dbReference type="InterPro" id="IPR048259">
    <property type="entry name" value="Cytochrome_b_N_euk/bac"/>
</dbReference>
<dbReference type="InterPro" id="IPR016174">
    <property type="entry name" value="Di-haem_cyt_TM"/>
</dbReference>
<dbReference type="NCBIfam" id="NF002990">
    <property type="entry name" value="PRK03735.1"/>
    <property type="match status" value="1"/>
</dbReference>
<dbReference type="PANTHER" id="PTHR19271">
    <property type="entry name" value="CYTOCHROME B"/>
    <property type="match status" value="1"/>
</dbReference>
<dbReference type="PANTHER" id="PTHR19271:SF16">
    <property type="entry name" value="CYTOCHROME B"/>
    <property type="match status" value="1"/>
</dbReference>
<dbReference type="Pfam" id="PF00033">
    <property type="entry name" value="Cytochrome_B"/>
    <property type="match status" value="1"/>
</dbReference>
<dbReference type="PIRSF" id="PIRSF000032">
    <property type="entry name" value="Cytochrome_b6"/>
    <property type="match status" value="1"/>
</dbReference>
<dbReference type="SUPFAM" id="SSF81342">
    <property type="entry name" value="Transmembrane di-heme cytochromes"/>
    <property type="match status" value="1"/>
</dbReference>
<dbReference type="PROSITE" id="PS51002">
    <property type="entry name" value="CYTB_NTER"/>
    <property type="match status" value="1"/>
</dbReference>
<name>CYB6_CUSGR</name>
<geneLocation type="plastid"/>
<gene>
    <name type="primary">petB</name>
</gene>
<keyword id="KW-0249">Electron transport</keyword>
<keyword id="KW-0349">Heme</keyword>
<keyword id="KW-0408">Iron</keyword>
<keyword id="KW-0472">Membrane</keyword>
<keyword id="KW-0479">Metal-binding</keyword>
<keyword id="KW-0602">Photosynthesis</keyword>
<keyword id="KW-0934">Plastid</keyword>
<keyword id="KW-0793">Thylakoid</keyword>
<keyword id="KW-0812">Transmembrane</keyword>
<keyword id="KW-1133">Transmembrane helix</keyword>
<keyword id="KW-0813">Transport</keyword>
<accession>A7M927</accession>
<proteinExistence type="evidence at transcript level"/>